<organism>
    <name type="scientific">Arabidopsis thaliana</name>
    <name type="common">Mouse-ear cress</name>
    <dbReference type="NCBI Taxonomy" id="3702"/>
    <lineage>
        <taxon>Eukaryota</taxon>
        <taxon>Viridiplantae</taxon>
        <taxon>Streptophyta</taxon>
        <taxon>Embryophyta</taxon>
        <taxon>Tracheophyta</taxon>
        <taxon>Spermatophyta</taxon>
        <taxon>Magnoliopsida</taxon>
        <taxon>eudicotyledons</taxon>
        <taxon>Gunneridae</taxon>
        <taxon>Pentapetalae</taxon>
        <taxon>rosids</taxon>
        <taxon>malvids</taxon>
        <taxon>Brassicales</taxon>
        <taxon>Brassicaceae</taxon>
        <taxon>Camelineae</taxon>
        <taxon>Arabidopsis</taxon>
    </lineage>
</organism>
<reference key="1">
    <citation type="submission" date="2004-01" db="EMBL/GenBank/DDBJ databases">
        <title>The MYB transcription factor family in Arabidopsis: a genome-wide cloning and expression pattern analysis.</title>
        <authorList>
            <person name="Qu L."/>
            <person name="Gu H."/>
        </authorList>
    </citation>
    <scope>NUCLEOTIDE SEQUENCE [MRNA]</scope>
</reference>
<reference key="2">
    <citation type="journal article" date="2000" name="Nature">
        <title>Sequence and analysis of chromosome 5 of the plant Arabidopsis thaliana.</title>
        <authorList>
            <person name="Tabata S."/>
            <person name="Kaneko T."/>
            <person name="Nakamura Y."/>
            <person name="Kotani H."/>
            <person name="Kato T."/>
            <person name="Asamizu E."/>
            <person name="Miyajima N."/>
            <person name="Sasamoto S."/>
            <person name="Kimura T."/>
            <person name="Hosouchi T."/>
            <person name="Kawashima K."/>
            <person name="Kohara M."/>
            <person name="Matsumoto M."/>
            <person name="Matsuno A."/>
            <person name="Muraki A."/>
            <person name="Nakayama S."/>
            <person name="Nakazaki N."/>
            <person name="Naruo K."/>
            <person name="Okumura S."/>
            <person name="Shinpo S."/>
            <person name="Takeuchi C."/>
            <person name="Wada T."/>
            <person name="Watanabe A."/>
            <person name="Yamada M."/>
            <person name="Yasuda M."/>
            <person name="Sato S."/>
            <person name="de la Bastide M."/>
            <person name="Huang E."/>
            <person name="Spiegel L."/>
            <person name="Gnoj L."/>
            <person name="O'Shaughnessy A."/>
            <person name="Preston R."/>
            <person name="Habermann K."/>
            <person name="Murray J."/>
            <person name="Johnson D."/>
            <person name="Rohlfing T."/>
            <person name="Nelson J."/>
            <person name="Stoneking T."/>
            <person name="Pepin K."/>
            <person name="Spieth J."/>
            <person name="Sekhon M."/>
            <person name="Armstrong J."/>
            <person name="Becker M."/>
            <person name="Belter E."/>
            <person name="Cordum H."/>
            <person name="Cordes M."/>
            <person name="Courtney L."/>
            <person name="Courtney W."/>
            <person name="Dante M."/>
            <person name="Du H."/>
            <person name="Edwards J."/>
            <person name="Fryman J."/>
            <person name="Haakensen B."/>
            <person name="Lamar E."/>
            <person name="Latreille P."/>
            <person name="Leonard S."/>
            <person name="Meyer R."/>
            <person name="Mulvaney E."/>
            <person name="Ozersky P."/>
            <person name="Riley A."/>
            <person name="Strowmatt C."/>
            <person name="Wagner-McPherson C."/>
            <person name="Wollam A."/>
            <person name="Yoakum M."/>
            <person name="Bell M."/>
            <person name="Dedhia N."/>
            <person name="Parnell L."/>
            <person name="Shah R."/>
            <person name="Rodriguez M."/>
            <person name="Hoon See L."/>
            <person name="Vil D."/>
            <person name="Baker J."/>
            <person name="Kirchoff K."/>
            <person name="Toth K."/>
            <person name="King L."/>
            <person name="Bahret A."/>
            <person name="Miller B."/>
            <person name="Marra M.A."/>
            <person name="Martienssen R."/>
            <person name="McCombie W.R."/>
            <person name="Wilson R.K."/>
            <person name="Murphy G."/>
            <person name="Bancroft I."/>
            <person name="Volckaert G."/>
            <person name="Wambutt R."/>
            <person name="Duesterhoeft A."/>
            <person name="Stiekema W."/>
            <person name="Pohl T."/>
            <person name="Entian K.-D."/>
            <person name="Terryn N."/>
            <person name="Hartley N."/>
            <person name="Bent E."/>
            <person name="Johnson S."/>
            <person name="Langham S.-A."/>
            <person name="McCullagh B."/>
            <person name="Robben J."/>
            <person name="Grymonprez B."/>
            <person name="Zimmermann W."/>
            <person name="Ramsperger U."/>
            <person name="Wedler H."/>
            <person name="Balke K."/>
            <person name="Wedler E."/>
            <person name="Peters S."/>
            <person name="van Staveren M."/>
            <person name="Dirkse W."/>
            <person name="Mooijman P."/>
            <person name="Klein Lankhorst R."/>
            <person name="Weitzenegger T."/>
            <person name="Bothe G."/>
            <person name="Rose M."/>
            <person name="Hauf J."/>
            <person name="Berneiser S."/>
            <person name="Hempel S."/>
            <person name="Feldpausch M."/>
            <person name="Lamberth S."/>
            <person name="Villarroel R."/>
            <person name="Gielen J."/>
            <person name="Ardiles W."/>
            <person name="Bents O."/>
            <person name="Lemcke K."/>
            <person name="Kolesov G."/>
            <person name="Mayer K.F.X."/>
            <person name="Rudd S."/>
            <person name="Schoof H."/>
            <person name="Schueller C."/>
            <person name="Zaccaria P."/>
            <person name="Mewes H.-W."/>
            <person name="Bevan M."/>
            <person name="Fransz P.F."/>
        </authorList>
    </citation>
    <scope>NUCLEOTIDE SEQUENCE [LARGE SCALE GENOMIC DNA]</scope>
    <source>
        <strain>cv. Columbia</strain>
    </source>
</reference>
<reference key="3">
    <citation type="journal article" date="2017" name="Plant J.">
        <title>Araport11: a complete reannotation of the Arabidopsis thaliana reference genome.</title>
        <authorList>
            <person name="Cheng C.Y."/>
            <person name="Krishnakumar V."/>
            <person name="Chan A.P."/>
            <person name="Thibaud-Nissen F."/>
            <person name="Schobel S."/>
            <person name="Town C.D."/>
        </authorList>
    </citation>
    <scope>GENOME REANNOTATION</scope>
    <source>
        <strain>cv. Columbia</strain>
    </source>
</reference>
<reference key="4">
    <citation type="journal article" date="2003" name="Science">
        <title>Empirical analysis of transcriptional activity in the Arabidopsis genome.</title>
        <authorList>
            <person name="Yamada K."/>
            <person name="Lim J."/>
            <person name="Dale J.M."/>
            <person name="Chen H."/>
            <person name="Shinn P."/>
            <person name="Palm C.J."/>
            <person name="Southwick A.M."/>
            <person name="Wu H.C."/>
            <person name="Kim C.J."/>
            <person name="Nguyen M."/>
            <person name="Pham P.K."/>
            <person name="Cheuk R.F."/>
            <person name="Karlin-Newmann G."/>
            <person name="Liu S.X."/>
            <person name="Lam B."/>
            <person name="Sakano H."/>
            <person name="Wu T."/>
            <person name="Yu G."/>
            <person name="Miranda M."/>
            <person name="Quach H.L."/>
            <person name="Tripp M."/>
            <person name="Chang C.H."/>
            <person name="Lee J.M."/>
            <person name="Toriumi M.J."/>
            <person name="Chan M.M."/>
            <person name="Tang C.C."/>
            <person name="Onodera C.S."/>
            <person name="Deng J.M."/>
            <person name="Akiyama K."/>
            <person name="Ansari Y."/>
            <person name="Arakawa T."/>
            <person name="Banh J."/>
            <person name="Banno F."/>
            <person name="Bowser L."/>
            <person name="Brooks S.Y."/>
            <person name="Carninci P."/>
            <person name="Chao Q."/>
            <person name="Choy N."/>
            <person name="Enju A."/>
            <person name="Goldsmith A.D."/>
            <person name="Gurjal M."/>
            <person name="Hansen N.F."/>
            <person name="Hayashizaki Y."/>
            <person name="Johnson-Hopson C."/>
            <person name="Hsuan V.W."/>
            <person name="Iida K."/>
            <person name="Karnes M."/>
            <person name="Khan S."/>
            <person name="Koesema E."/>
            <person name="Ishida J."/>
            <person name="Jiang P.X."/>
            <person name="Jones T."/>
            <person name="Kawai J."/>
            <person name="Kamiya A."/>
            <person name="Meyers C."/>
            <person name="Nakajima M."/>
            <person name="Narusaka M."/>
            <person name="Seki M."/>
            <person name="Sakurai T."/>
            <person name="Satou M."/>
            <person name="Tamse R."/>
            <person name="Vaysberg M."/>
            <person name="Wallender E.K."/>
            <person name="Wong C."/>
            <person name="Yamamura Y."/>
            <person name="Yuan S."/>
            <person name="Shinozaki K."/>
            <person name="Davis R.W."/>
            <person name="Theologis A."/>
            <person name="Ecker J.R."/>
        </authorList>
    </citation>
    <scope>NUCLEOTIDE SEQUENCE [LARGE SCALE MRNA]</scope>
    <source>
        <strain>cv. Columbia</strain>
    </source>
</reference>
<reference key="5">
    <citation type="journal article" date="1998" name="Plant J.">
        <title>Towards functional characterisation of the members of the R2R3-MYB gene family from Arabidopsis thaliana.</title>
        <authorList>
            <person name="Kranz H.D."/>
            <person name="Denekamp M."/>
            <person name="Greco R."/>
            <person name="Jin H.-L."/>
            <person name="Leyva A."/>
            <person name="Meissner R.C."/>
            <person name="Petroni K."/>
            <person name="Urzainqui A."/>
            <person name="Bevan M."/>
            <person name="Martin C."/>
            <person name="Smeekens S."/>
            <person name="Tonelli C."/>
            <person name="Paz-Ares J."/>
            <person name="Weisshaar B."/>
        </authorList>
    </citation>
    <scope>NUCLEOTIDE SEQUENCE [MRNA] OF 75-280</scope>
    <scope>TISSUE SPECIFICITY</scope>
    <source>
        <strain>cv. Columbia</strain>
    </source>
</reference>
<reference key="6">
    <citation type="journal article" date="2001" name="Curr. Opin. Plant Biol.">
        <title>The R2R3-MYB gene family in Arabidopsis thaliana.</title>
        <authorList>
            <person name="Stracke R."/>
            <person name="Werber M."/>
            <person name="Weisshaar B."/>
        </authorList>
    </citation>
    <scope>GENE FAMILY</scope>
    <scope>NOMENCLATURE</scope>
</reference>
<reference key="7">
    <citation type="journal article" date="2006" name="Proc. Natl. Acad. Sci. U.S.A.">
        <title>Transcriptional and posttranscriptional regulation of transcription factor expression in Arabidopsis roots.</title>
        <authorList>
            <person name="Lee J.-Y."/>
            <person name="Colinas J."/>
            <person name="Wang J.Y."/>
            <person name="Mace D."/>
            <person name="Ohler U."/>
            <person name="Benfey P.N."/>
        </authorList>
    </citation>
    <scope>SUBCELLULAR LOCATION</scope>
    <scope>TISSUE SPECIFICITY</scope>
</reference>
<reference key="8">
    <citation type="journal article" date="2006" name="Plant Mol. Biol.">
        <title>The MYB transcription factor superfamily of Arabidopsis: expression analysis and phylogenetic comparison with the rice MYB family.</title>
        <authorList>
            <person name="Chen Y."/>
            <person name="Yang X."/>
            <person name="He K."/>
            <person name="Liu M."/>
            <person name="Li J."/>
            <person name="Gao Z."/>
            <person name="Lin Z."/>
            <person name="Zhang Y."/>
            <person name="Wang X."/>
            <person name="Qiu X."/>
            <person name="Shen Y."/>
            <person name="Zhang L."/>
            <person name="Deng X."/>
            <person name="Luo J."/>
            <person name="Deng X.-W."/>
            <person name="Chen Z."/>
            <person name="Gu H."/>
            <person name="Qu L.-J."/>
        </authorList>
    </citation>
    <scope>INDUCTION BY SA</scope>
    <scope>GENE FAMILY</scope>
</reference>
<reference key="9">
    <citation type="journal article" date="2007" name="Plant Cell">
        <title>The MYB46 transcription factor is a direct target of SND1 and regulates secondary wall biosynthesis in Arabidopsis.</title>
        <authorList>
            <person name="Zhong R."/>
            <person name="Richardson E.A."/>
            <person name="Ye Z.-H."/>
        </authorList>
    </citation>
    <scope>FUNCTION</scope>
    <scope>INDUCTION BY SND1</scope>
    <scope>SUBCELLULAR LOCATION</scope>
    <scope>TISSUE SPECIFICITY</scope>
</reference>
<reference key="10">
    <citation type="journal article" date="2009" name="Plant Cell Physiol.">
        <title>MYB83 is a direct target of SND1 and acts redundantly with MYB46 in the regulation of secondary cell wall biosynthesis in Arabidopsis.</title>
        <authorList>
            <person name="McCarthy R.L."/>
            <person name="Zhong R."/>
            <person name="Ye Z.-H."/>
        </authorList>
    </citation>
    <scope>FUNCTION</scope>
    <scope>DISRUPTION PHENOTYPE</scope>
</reference>
<reference key="11">
    <citation type="journal article" date="2012" name="Plant Cell Physiol.">
        <title>MYB46 and MYB83 bind to the SMRE sites and directly activate a suite of transcription factors and secondary wall biosynthetic genes.</title>
        <authorList>
            <person name="Zhong R."/>
            <person name="Ye Z.H."/>
        </authorList>
    </citation>
    <scope>FUNCTION</scope>
</reference>
<reference key="12">
    <citation type="journal article" date="2013" name="J. Plant Physiol.">
        <title>Transcription factor MYB46 is an obligate component of the transcriptional regulatory complex for functional expression of secondary wall-associated cellulose synthases in Arabidopsis thaliana.</title>
        <authorList>
            <person name="Kim W.C."/>
            <person name="Kim J.Y."/>
            <person name="Ko J.H."/>
            <person name="Kim J."/>
            <person name="Han K.H."/>
        </authorList>
    </citation>
    <scope>FUNCTION</scope>
</reference>
<reference key="13">
    <citation type="journal article" date="2014" name="Plant Mol. Biol.">
        <title>Transcription factors that directly regulate the expression of CSLA9 encoding mannan synthase in Arabidopsis thaliana.</title>
        <authorList>
            <person name="Kim W.C."/>
            <person name="Reca I.B."/>
            <person name="Kim Y."/>
            <person name="Park S."/>
            <person name="Thomashow M.F."/>
            <person name="Keegstra K."/>
            <person name="Han K.H."/>
        </authorList>
    </citation>
    <scope>FUNCTION</scope>
</reference>
<accession>Q9LXV2</accession>
<accession>Q9ZTE1</accession>
<keyword id="KW-0010">Activator</keyword>
<keyword id="KW-0238">DNA-binding</keyword>
<keyword id="KW-0539">Nucleus</keyword>
<keyword id="KW-1185">Reference proteome</keyword>
<keyword id="KW-0677">Repeat</keyword>
<keyword id="KW-0804">Transcription</keyword>
<keyword id="KW-0805">Transcription regulation</keyword>
<comment type="function">
    <text evidence="5 6 7 8 9">Transcription activator. Involved in the regulation of secondary wall biosynthesis in fibers and vessels (PubMed:17890373). Transcription activator of the mannan synthase CSLA9 that recognizes and binds to the DNA consensus sequence 5'-[AG][GT]T[AT]GGT[GA]-3' cis-regulatory element of CSLA9 promoter (PubMed:24243147). Transcription factor that acts as a molecular switch in the NAC012/SND1-mediated transcriptional network regulating secondary wall biosynthesis. Is directly activated by NAC012/SND1. Functions redundantly with MYB83 in the transcriptional regulatory cascade leading to secondary wall formation in fibers and vessels (PubMed:19808805). Transcription activator that binds to the DNA consensus sequence 5'-ACC[AT]A[AC][TC]-3', designated as the secondary wall MYB-responsive element (SMRE). Regulates directly numerous transcription factors and a number of genes involved in secondary wall biosynthesis that contain SMRE elements in their promoters (PubMed:22197883). Is an obligate component of the transcriptional regulatory complex toward the commitment of secondary wall cellulose synthesis. Is required for functional expression of the three secondary wall CESA genes, CESA4, CESA7 and CESA8 (PubMed:23726771).</text>
</comment>
<comment type="subcellular location">
    <subcellularLocation>
        <location evidence="1 4 5">Nucleus</location>
    </subcellularLocation>
</comment>
<comment type="tissue specificity">
    <text evidence="4 5 10">Expressed at low levels in stems and siliques, specifically in xylem.</text>
</comment>
<comment type="induction">
    <text evidence="3 5">Slightly induced by salicylic acid (SA). Positively regulated by SND1 and homolog proteins.</text>
</comment>
<comment type="disruption phenotype">
    <text evidence="6">No visible phenotype under normal growth conditions, but the double mutant plants myb48 and myb83 nearly lack secondary wall thickening, stop growing after developing one to two pairs of small leaves and subsequently die.</text>
</comment>
<comment type="miscellaneous">
    <text evidence="9">Plants over-expressing MYB46 show a significant increase in mannan synthase activity and mannan content in plant.</text>
</comment>
<feature type="chain" id="PRO_0000323610" description="Transcription factor MYB46">
    <location>
        <begin position="1"/>
        <end position="280"/>
    </location>
</feature>
<feature type="domain" description="HTH myb-type 1" evidence="1">
    <location>
        <begin position="15"/>
        <end position="67"/>
    </location>
</feature>
<feature type="domain" description="HTH myb-type 2" evidence="1">
    <location>
        <begin position="68"/>
        <end position="122"/>
    </location>
</feature>
<feature type="DNA-binding region" description="H-T-H motif" evidence="1">
    <location>
        <begin position="43"/>
        <end position="67"/>
    </location>
</feature>
<feature type="DNA-binding region" description="H-T-H motif" evidence="1">
    <location>
        <begin position="95"/>
        <end position="118"/>
    </location>
</feature>
<feature type="region of interest" description="Disordered" evidence="2">
    <location>
        <begin position="129"/>
        <end position="150"/>
    </location>
</feature>
<evidence type="ECO:0000255" key="1">
    <source>
        <dbReference type="PROSITE-ProRule" id="PRU00625"/>
    </source>
</evidence>
<evidence type="ECO:0000256" key="2">
    <source>
        <dbReference type="SAM" id="MobiDB-lite"/>
    </source>
</evidence>
<evidence type="ECO:0000269" key="3">
    <source>
    </source>
</evidence>
<evidence type="ECO:0000269" key="4">
    <source>
    </source>
</evidence>
<evidence type="ECO:0000269" key="5">
    <source>
    </source>
</evidence>
<evidence type="ECO:0000269" key="6">
    <source>
    </source>
</evidence>
<evidence type="ECO:0000269" key="7">
    <source>
    </source>
</evidence>
<evidence type="ECO:0000269" key="8">
    <source>
    </source>
</evidence>
<evidence type="ECO:0000269" key="9">
    <source>
    </source>
</evidence>
<evidence type="ECO:0000269" key="10">
    <source>
    </source>
</evidence>
<evidence type="ECO:0000303" key="11">
    <source>
    </source>
</evidence>
<dbReference type="EMBL" id="AY519621">
    <property type="protein sequence ID" value="AAS10091.1"/>
    <property type="molecule type" value="mRNA"/>
</dbReference>
<dbReference type="EMBL" id="AL353013">
    <property type="protein sequence ID" value="CAB88251.1"/>
    <property type="molecule type" value="Genomic_DNA"/>
</dbReference>
<dbReference type="EMBL" id="CP002688">
    <property type="protein sequence ID" value="AED91824.1"/>
    <property type="molecule type" value="Genomic_DNA"/>
</dbReference>
<dbReference type="EMBL" id="BT000455">
    <property type="protein sequence ID" value="AAN17432.1"/>
    <property type="molecule type" value="mRNA"/>
</dbReference>
<dbReference type="EMBL" id="BT002549">
    <property type="protein sequence ID" value="AAO00909.1"/>
    <property type="molecule type" value="mRNA"/>
</dbReference>
<dbReference type="EMBL" id="AF062884">
    <property type="protein sequence ID" value="AAC83606.1"/>
    <property type="molecule type" value="mRNA"/>
</dbReference>
<dbReference type="PIR" id="T49901">
    <property type="entry name" value="T49901"/>
</dbReference>
<dbReference type="PIR" id="T51656">
    <property type="entry name" value="T51656"/>
</dbReference>
<dbReference type="RefSeq" id="NP_196791.1">
    <property type="nucleotide sequence ID" value="NM_121290.3"/>
</dbReference>
<dbReference type="SMR" id="Q9LXV2"/>
<dbReference type="BioGRID" id="16405">
    <property type="interactions" value="3"/>
</dbReference>
<dbReference type="FunCoup" id="Q9LXV2">
    <property type="interactions" value="12"/>
</dbReference>
<dbReference type="IntAct" id="Q9LXV2">
    <property type="interactions" value="2"/>
</dbReference>
<dbReference type="STRING" id="3702.Q9LXV2"/>
<dbReference type="PaxDb" id="3702-AT5G12870.1"/>
<dbReference type="EnsemblPlants" id="AT5G12870.1">
    <property type="protein sequence ID" value="AT5G12870.1"/>
    <property type="gene ID" value="AT5G12870"/>
</dbReference>
<dbReference type="GeneID" id="831127"/>
<dbReference type="Gramene" id="AT5G12870.1">
    <property type="protein sequence ID" value="AT5G12870.1"/>
    <property type="gene ID" value="AT5G12870"/>
</dbReference>
<dbReference type="KEGG" id="ath:AT5G12870"/>
<dbReference type="Araport" id="AT5G12870"/>
<dbReference type="TAIR" id="AT5G12870">
    <property type="gene designation" value="MYB46"/>
</dbReference>
<dbReference type="eggNOG" id="KOG0048">
    <property type="taxonomic scope" value="Eukaryota"/>
</dbReference>
<dbReference type="HOGENOM" id="CLU_028567_16_2_1"/>
<dbReference type="InParanoid" id="Q9LXV2"/>
<dbReference type="OMA" id="FWDLDQL"/>
<dbReference type="OrthoDB" id="2143914at2759"/>
<dbReference type="PhylomeDB" id="Q9LXV2"/>
<dbReference type="PRO" id="PR:Q9LXV2"/>
<dbReference type="Proteomes" id="UP000006548">
    <property type="component" value="Chromosome 5"/>
</dbReference>
<dbReference type="ExpressionAtlas" id="Q9LXV2">
    <property type="expression patterns" value="baseline and differential"/>
</dbReference>
<dbReference type="GO" id="GO:0005634">
    <property type="term" value="C:nucleus"/>
    <property type="evidence" value="ECO:0000314"/>
    <property type="project" value="TAIR"/>
</dbReference>
<dbReference type="GO" id="GO:0003700">
    <property type="term" value="F:DNA-binding transcription factor activity"/>
    <property type="evidence" value="ECO:0000314"/>
    <property type="project" value="TAIR"/>
</dbReference>
<dbReference type="GO" id="GO:0000976">
    <property type="term" value="F:transcription cis-regulatory region binding"/>
    <property type="evidence" value="ECO:0000353"/>
    <property type="project" value="TAIR"/>
</dbReference>
<dbReference type="GO" id="GO:0050832">
    <property type="term" value="P:defense response to fungus"/>
    <property type="evidence" value="ECO:0000315"/>
    <property type="project" value="TAIR"/>
</dbReference>
<dbReference type="GO" id="GO:0009834">
    <property type="term" value="P:plant-type secondary cell wall biogenesis"/>
    <property type="evidence" value="ECO:0000315"/>
    <property type="project" value="TAIR"/>
</dbReference>
<dbReference type="GO" id="GO:0045893">
    <property type="term" value="P:positive regulation of DNA-templated transcription"/>
    <property type="evidence" value="ECO:0000314"/>
    <property type="project" value="TAIR"/>
</dbReference>
<dbReference type="GO" id="GO:1901348">
    <property type="term" value="P:positive regulation of secondary cell wall biogenesis"/>
    <property type="evidence" value="ECO:0000315"/>
    <property type="project" value="TAIR"/>
</dbReference>
<dbReference type="GO" id="GO:2000652">
    <property type="term" value="P:regulation of secondary cell wall biogenesis"/>
    <property type="evidence" value="ECO:0000315"/>
    <property type="project" value="TAIR"/>
</dbReference>
<dbReference type="CDD" id="cd00167">
    <property type="entry name" value="SANT"/>
    <property type="match status" value="2"/>
</dbReference>
<dbReference type="FunFam" id="1.10.10.60:FF:000077">
    <property type="entry name" value="MYB transcription factor"/>
    <property type="match status" value="1"/>
</dbReference>
<dbReference type="FunFam" id="1.10.10.60:FF:000269">
    <property type="entry name" value="Transcription factor MYB46"/>
    <property type="match status" value="1"/>
</dbReference>
<dbReference type="Gene3D" id="1.10.10.60">
    <property type="entry name" value="Homeodomain-like"/>
    <property type="match status" value="2"/>
</dbReference>
<dbReference type="InterPro" id="IPR009057">
    <property type="entry name" value="Homeodomain-like_sf"/>
</dbReference>
<dbReference type="InterPro" id="IPR017930">
    <property type="entry name" value="Myb_dom"/>
</dbReference>
<dbReference type="InterPro" id="IPR051953">
    <property type="entry name" value="Plant_SW-associated_TFs"/>
</dbReference>
<dbReference type="InterPro" id="IPR001005">
    <property type="entry name" value="SANT/Myb"/>
</dbReference>
<dbReference type="PANTHER" id="PTHR47997">
    <property type="entry name" value="MYB DOMAIN PROTEIN 55"/>
    <property type="match status" value="1"/>
</dbReference>
<dbReference type="PANTHER" id="PTHR47997:SF44">
    <property type="entry name" value="TRANSCRIPTION FACTOR MYB46"/>
    <property type="match status" value="1"/>
</dbReference>
<dbReference type="Pfam" id="PF00249">
    <property type="entry name" value="Myb_DNA-binding"/>
    <property type="match status" value="2"/>
</dbReference>
<dbReference type="SMART" id="SM00717">
    <property type="entry name" value="SANT"/>
    <property type="match status" value="2"/>
</dbReference>
<dbReference type="SUPFAM" id="SSF46689">
    <property type="entry name" value="Homeodomain-like"/>
    <property type="match status" value="1"/>
</dbReference>
<dbReference type="PROSITE" id="PS51294">
    <property type="entry name" value="HTH_MYB"/>
    <property type="match status" value="2"/>
</dbReference>
<proteinExistence type="evidence at transcript level"/>
<name>MYB46_ARATH</name>
<gene>
    <name evidence="11" type="primary">MYB46</name>
    <name type="ordered locus">At5g12870</name>
    <name type="ORF">T24H18.40</name>
</gene>
<protein>
    <recommendedName>
        <fullName evidence="11">Transcription factor MYB46</fullName>
    </recommendedName>
    <alternativeName>
        <fullName evidence="11">Myb-related protein 46</fullName>
        <shortName evidence="11">AtMYB46</shortName>
    </alternativeName>
</protein>
<sequence>MRKPEVAIAASTHQVKKMKKGLWSPEEDSKLMQYMLSNGQGCWSDVAKNAGLQRCGKSCRLRWINYLRPDLKRGAFSPQEEDLIIRFHSILGNRWSQIAARLPGRTDNEIKNFWNSTIKKRLKKMSDTSNLINNSSSSPNTASDSSSNSASSLDIKDIIGSFMSLQEQGFVNPSLTHIQTNNPFPTGNMISHPCNDDFTPYVDGIYGVNAGVQGELYFPPLECEEGDWYNANINNHLDELNTNGSGNAPEGMRPVEEFWDLDQLMNTEVPSFYFNFKQSI</sequence>